<protein>
    <recommendedName>
        <fullName evidence="4">U1-poneritoxin-Ni3b</fullName>
        <shortName evidence="4">U1-PONTX-Ni3b</shortName>
    </recommendedName>
    <alternativeName>
        <fullName evidence="5">Poneratoxin</fullName>
    </alternativeName>
    <alternativeName>
        <fullName evidence="3">Ponericin Pi I2</fullName>
    </alternativeName>
</protein>
<sequence>GWRDWLKKGKEWIKAKGPGIVKAALKAAVQ</sequence>
<dbReference type="GO" id="GO:0005576">
    <property type="term" value="C:extracellular region"/>
    <property type="evidence" value="ECO:0007669"/>
    <property type="project" value="UniProtKB-SubCell"/>
</dbReference>
<dbReference type="GO" id="GO:0090729">
    <property type="term" value="F:toxin activity"/>
    <property type="evidence" value="ECO:0007669"/>
    <property type="project" value="UniProtKB-KW"/>
</dbReference>
<dbReference type="GO" id="GO:0042742">
    <property type="term" value="P:defense response to bacterium"/>
    <property type="evidence" value="ECO:0007669"/>
    <property type="project" value="UniProtKB-KW"/>
</dbReference>
<dbReference type="GO" id="GO:0050832">
    <property type="term" value="P:defense response to fungus"/>
    <property type="evidence" value="ECO:0007669"/>
    <property type="project" value="UniProtKB-KW"/>
</dbReference>
<dbReference type="GO" id="GO:0031640">
    <property type="term" value="P:killing of cells of another organism"/>
    <property type="evidence" value="ECO:0007669"/>
    <property type="project" value="UniProtKB-KW"/>
</dbReference>
<dbReference type="InterPro" id="IPR010002">
    <property type="entry name" value="Poneritoxin"/>
</dbReference>
<dbReference type="Pfam" id="PF07442">
    <property type="entry name" value="Ponericin"/>
    <property type="match status" value="1"/>
</dbReference>
<reference key="1">
    <citation type="journal article" date="2014" name="Toxicon">
        <title>Diversity of peptide toxins from stinging ant venoms.</title>
        <authorList>
            <person name="Aili S.R."/>
            <person name="Touchard A."/>
            <person name="Escoubas P."/>
            <person name="Padula M.P."/>
            <person name="Orivel J."/>
            <person name="Dejean A."/>
            <person name="Nicholson G.M."/>
        </authorList>
    </citation>
    <scope>REVIEW</scope>
    <scope>PROTEIN SEQUENCE</scope>
</reference>
<reference key="2">
    <citation type="journal article" date="2016" name="Toxins">
        <title>The biochemical toxin arsenal from ant venoms.</title>
        <authorList>
            <person name="Touchard A."/>
            <person name="Aili S.R."/>
            <person name="Fox E.G."/>
            <person name="Escoubas P."/>
            <person name="Orivel J."/>
            <person name="Nicholson G.M."/>
            <person name="Dejean A."/>
        </authorList>
    </citation>
    <scope>REVIEW</scope>
    <scope>NOMENCLATURE</scope>
</reference>
<feature type="peptide" id="PRO_0000447060" description="U1-poneritoxin-Ni3b" evidence="2">
    <location>
        <begin position="1"/>
        <end position="30"/>
    </location>
</feature>
<proteinExistence type="evidence at protein level"/>
<keyword id="KW-0044">Antibiotic</keyword>
<keyword id="KW-0929">Antimicrobial</keyword>
<keyword id="KW-0903">Direct protein sequencing</keyword>
<keyword id="KW-0295">Fungicide</keyword>
<keyword id="KW-0964">Secreted</keyword>
<keyword id="KW-0800">Toxin</keyword>
<comment type="function">
    <text evidence="1">Shows a broad spectrum of activity against both Gram-positive and Gram-negative bacteria. Also has antimicrobial activity against S.cerevisiae. Has insecticidal and non-hemolytic activity.</text>
</comment>
<comment type="subcellular location">
    <subcellularLocation>
        <location evidence="6">Secreted</location>
    </subcellularLocation>
</comment>
<comment type="tissue specificity">
    <text evidence="6">Expressed by the venom gland.</text>
</comment>
<comment type="similarity">
    <text evidence="5">Belongs to the ponericin-G family.</text>
</comment>
<evidence type="ECO:0000250" key="1">
    <source>
        <dbReference type="UniProtKB" id="P82416"/>
    </source>
</evidence>
<evidence type="ECO:0000269" key="2">
    <source>
    </source>
</evidence>
<evidence type="ECO:0000303" key="3">
    <source>
    </source>
</evidence>
<evidence type="ECO:0000303" key="4">
    <source>
    </source>
</evidence>
<evidence type="ECO:0000305" key="5"/>
<evidence type="ECO:0000305" key="6">
    <source>
    </source>
</evidence>
<organism>
    <name type="scientific">Neoponera inversa</name>
    <name type="common">Ant</name>
    <name type="synonym">Ponera inversa</name>
    <dbReference type="NCBI Taxonomy" id="264722"/>
    <lineage>
        <taxon>Eukaryota</taxon>
        <taxon>Metazoa</taxon>
        <taxon>Ecdysozoa</taxon>
        <taxon>Arthropoda</taxon>
        <taxon>Hexapoda</taxon>
        <taxon>Insecta</taxon>
        <taxon>Pterygota</taxon>
        <taxon>Neoptera</taxon>
        <taxon>Endopterygota</taxon>
        <taxon>Hymenoptera</taxon>
        <taxon>Apocrita</taxon>
        <taxon>Aculeata</taxon>
        <taxon>Formicoidea</taxon>
        <taxon>Formicidae</taxon>
        <taxon>Ponerinae</taxon>
        <taxon>Ponerini</taxon>
        <taxon>Neoponera</taxon>
    </lineage>
</organism>
<name>GTX3B_NEOIV</name>
<accession>P0DSJ0</accession>